<gene>
    <name evidence="5" type="primary">IQM5</name>
    <name evidence="7" type="ordered locus">At5g57010</name>
    <name evidence="8" type="ORF">MHM17.13</name>
</gene>
<reference key="1">
    <citation type="journal article" date="2000" name="DNA Res.">
        <title>Structural analysis of Arabidopsis thaliana chromosome 5. X. Sequence features of the regions of 3,076,755 bp covered by sixty P1 and TAC clones.</title>
        <authorList>
            <person name="Sato S."/>
            <person name="Nakamura Y."/>
            <person name="Kaneko T."/>
            <person name="Katoh T."/>
            <person name="Asamizu E."/>
            <person name="Kotani H."/>
            <person name="Tabata S."/>
        </authorList>
    </citation>
    <scope>NUCLEOTIDE SEQUENCE [LARGE SCALE GENOMIC DNA]</scope>
    <source>
        <strain>cv. Columbia</strain>
    </source>
</reference>
<reference key="2">
    <citation type="journal article" date="2017" name="Plant J.">
        <title>Araport11: a complete reannotation of the Arabidopsis thaliana reference genome.</title>
        <authorList>
            <person name="Cheng C.Y."/>
            <person name="Krishnakumar V."/>
            <person name="Chan A.P."/>
            <person name="Thibaud-Nissen F."/>
            <person name="Schobel S."/>
            <person name="Town C.D."/>
        </authorList>
    </citation>
    <scope>GENOME REANNOTATION</scope>
    <source>
        <strain>cv. Columbia</strain>
    </source>
</reference>
<reference key="3">
    <citation type="submission" date="2006-10" db="EMBL/GenBank/DDBJ databases">
        <title>Arabidopsis ORF Clone.</title>
        <authorList>
            <person name="Bautista V.R."/>
            <person name="Kim C.J."/>
            <person name="Chen H."/>
            <person name="Quinitio C."/>
            <person name="Ecker J.R."/>
        </authorList>
    </citation>
    <scope>NUCLEOTIDE SEQUENCE [LARGE SCALE MRNA]</scope>
    <source>
        <strain>cv. Columbia</strain>
    </source>
</reference>
<reference key="4">
    <citation type="journal article" date="2010" name="Acta Physiol. Plant.">
        <title>Sequence and expression analysis of the Arabidopsis IQM family.</title>
        <authorList>
            <person name="Zhou Y."/>
            <person name="Chen Y."/>
            <person name="Yamamoto K.T."/>
            <person name="Duan J."/>
            <person name="Tian C."/>
        </authorList>
    </citation>
    <scope>GENE FAMILY</scope>
    <scope>NOMENCLATURE</scope>
    <scope>TISSUE SPECIFICITY</scope>
    <scope>INDUCTION</scope>
</reference>
<accession>Q058N0</accession>
<accession>Q9LTS0</accession>
<keyword id="KW-0963">Cytoplasm</keyword>
<keyword id="KW-0539">Nucleus</keyword>
<keyword id="KW-1185">Reference proteome</keyword>
<evidence type="ECO:0000250" key="1">
    <source>
        <dbReference type="UniProtKB" id="O82645"/>
    </source>
</evidence>
<evidence type="ECO:0000255" key="2">
    <source>
        <dbReference type="PROSITE-ProRule" id="PRU00116"/>
    </source>
</evidence>
<evidence type="ECO:0000256" key="3">
    <source>
        <dbReference type="SAM" id="MobiDB-lite"/>
    </source>
</evidence>
<evidence type="ECO:0000269" key="4">
    <source ref="4"/>
</evidence>
<evidence type="ECO:0000303" key="5">
    <source ref="4"/>
</evidence>
<evidence type="ECO:0000305" key="6"/>
<evidence type="ECO:0000312" key="7">
    <source>
        <dbReference type="Araport" id="AT5G57010"/>
    </source>
</evidence>
<evidence type="ECO:0000312" key="8">
    <source>
        <dbReference type="EMBL" id="BAA97031.1"/>
    </source>
</evidence>
<comment type="function">
    <text evidence="1">May be involved in biotic and abiotic stress responses.</text>
</comment>
<comment type="subcellular location">
    <subcellularLocation>
        <location evidence="1">Cytoplasm</location>
    </subcellularLocation>
    <subcellularLocation>
        <location evidence="1">Nucleus</location>
    </subcellularLocation>
</comment>
<comment type="tissue specificity">
    <text evidence="4">Expressed in roots, rosette and cauline leaves, and at lower levels in stems, flowers and siliques.</text>
</comment>
<comment type="induction">
    <text evidence="4">Down-regulated by salt stress and treatment with mannitol.</text>
</comment>
<comment type="sequence caution" evidence="6">
    <conflict type="erroneous gene model prediction">
        <sequence resource="EMBL-CDS" id="BAA97031"/>
    </conflict>
</comment>
<name>IQM5_ARATH</name>
<organism>
    <name type="scientific">Arabidopsis thaliana</name>
    <name type="common">Mouse-ear cress</name>
    <dbReference type="NCBI Taxonomy" id="3702"/>
    <lineage>
        <taxon>Eukaryota</taxon>
        <taxon>Viridiplantae</taxon>
        <taxon>Streptophyta</taxon>
        <taxon>Embryophyta</taxon>
        <taxon>Tracheophyta</taxon>
        <taxon>Spermatophyta</taxon>
        <taxon>Magnoliopsida</taxon>
        <taxon>eudicotyledons</taxon>
        <taxon>Gunneridae</taxon>
        <taxon>Pentapetalae</taxon>
        <taxon>rosids</taxon>
        <taxon>malvids</taxon>
        <taxon>Brassicales</taxon>
        <taxon>Brassicaceae</taxon>
        <taxon>Camelineae</taxon>
        <taxon>Arabidopsis</taxon>
    </lineage>
</organism>
<feature type="chain" id="PRO_0000433921" description="IQ domain-containing protein IQM5">
    <location>
        <begin position="1"/>
        <end position="495"/>
    </location>
</feature>
<feature type="domain" description="IQ" evidence="2">
    <location>
        <begin position="131"/>
        <end position="160"/>
    </location>
</feature>
<feature type="region of interest" description="Disordered" evidence="3">
    <location>
        <begin position="89"/>
        <end position="122"/>
    </location>
</feature>
<dbReference type="EMBL" id="AB024035">
    <property type="protein sequence ID" value="BAA97031.1"/>
    <property type="status" value="ALT_SEQ"/>
    <property type="molecule type" value="Genomic_DNA"/>
</dbReference>
<dbReference type="EMBL" id="CP002688">
    <property type="protein sequence ID" value="AED96833.1"/>
    <property type="molecule type" value="Genomic_DNA"/>
</dbReference>
<dbReference type="EMBL" id="BT029188">
    <property type="protein sequence ID" value="ABJ17123.1"/>
    <property type="molecule type" value="mRNA"/>
</dbReference>
<dbReference type="RefSeq" id="NP_200511.1">
    <property type="nucleotide sequence ID" value="NM_125083.3"/>
</dbReference>
<dbReference type="IntAct" id="Q058N0">
    <property type="interactions" value="2"/>
</dbReference>
<dbReference type="STRING" id="3702.Q058N0"/>
<dbReference type="GlyGen" id="Q058N0">
    <property type="glycosylation" value="1 site"/>
</dbReference>
<dbReference type="PaxDb" id="3702-AT5G57010.1"/>
<dbReference type="EnsemblPlants" id="AT5G57010.1">
    <property type="protein sequence ID" value="AT5G57010.1"/>
    <property type="gene ID" value="AT5G57010"/>
</dbReference>
<dbReference type="GeneID" id="835803"/>
<dbReference type="Gramene" id="AT5G57010.1">
    <property type="protein sequence ID" value="AT5G57010.1"/>
    <property type="gene ID" value="AT5G57010"/>
</dbReference>
<dbReference type="KEGG" id="ath:AT5G57010"/>
<dbReference type="Araport" id="AT5G57010"/>
<dbReference type="TAIR" id="AT5G57010"/>
<dbReference type="eggNOG" id="ENOG502QRWH">
    <property type="taxonomic scope" value="Eukaryota"/>
</dbReference>
<dbReference type="HOGENOM" id="CLU_026344_0_1_1"/>
<dbReference type="InParanoid" id="Q058N0"/>
<dbReference type="OMA" id="TQPFFFW"/>
<dbReference type="PhylomeDB" id="Q058N0"/>
<dbReference type="PRO" id="PR:Q058N0"/>
<dbReference type="Proteomes" id="UP000006548">
    <property type="component" value="Chromosome 5"/>
</dbReference>
<dbReference type="ExpressionAtlas" id="Q058N0">
    <property type="expression patterns" value="baseline and differential"/>
</dbReference>
<dbReference type="GO" id="GO:0005737">
    <property type="term" value="C:cytoplasm"/>
    <property type="evidence" value="ECO:0007669"/>
    <property type="project" value="UniProtKB-SubCell"/>
</dbReference>
<dbReference type="GO" id="GO:0005634">
    <property type="term" value="C:nucleus"/>
    <property type="evidence" value="ECO:0007669"/>
    <property type="project" value="UniProtKB-SubCell"/>
</dbReference>
<dbReference type="InterPro" id="IPR044159">
    <property type="entry name" value="IQM"/>
</dbReference>
<dbReference type="PANTHER" id="PTHR31250">
    <property type="entry name" value="IQ DOMAIN-CONTAINING PROTEIN IQM3"/>
    <property type="match status" value="1"/>
</dbReference>
<dbReference type="PANTHER" id="PTHR31250:SF27">
    <property type="entry name" value="IQ DOMAIN-CONTAINING PROTEIN IQM5"/>
    <property type="match status" value="1"/>
</dbReference>
<sequence length="495" mass="56151">MALSFGYLQRDNSFKKDSQECETPRIRKTPVNMYLEKTLSFKDLVDQRNNYRDGNCGVKTRKGINLKGPKPDNMILDRSLSFTSLVQVENRGGEEEDERGSSPKRRNRGNLTALSLPAPTPFWSPRPSTELDAAAVTLQKVYKSYRTRRNLADCAVVVEELWWKELELAKLEPNKTNDKPESAVSRWARAGTKAAKVGKGLLKDDKAQKLALRHWLEAIDPRHRYGHNLHLYYDVWSESESTQPFFFWLDIGDGKEVNLNKCSRTLLQRQCITYLGPKERQAYEVVVEDGKLVSRQTKSLVETTEGTKWIFVLSTTRKLYIGQKQKGRFQHSSFLSGAAITAAGRIVSHDGVVKAVWPYSGHYLPTEENFREFICFLRENHVNLTNVKMNAIDDDDHLVNNDGSTKPSMMVAKSDGSDEQKRFSCKWSTGNGPRIGCVRDYPMDLQTRALEQVNLSPRVVNGTMGLFGPIPSPRPSPKIRVSPRLSCMGLPSPRH</sequence>
<protein>
    <recommendedName>
        <fullName evidence="6">IQ domain-containing protein IQM5</fullName>
    </recommendedName>
    <alternativeName>
        <fullName evidence="5">IQ motif-containing protein 5</fullName>
    </alternativeName>
</protein>
<proteinExistence type="evidence at transcript level"/>